<proteinExistence type="inferred from homology"/>
<sequence length="460" mass="50282">MTGNEKNFNHSKTKKVLVLGLAKSGFSAAKLLHELGALVTVNDGKPFDEKPEAQELLSLGVKVIAGSHPIELLDEEFSLMVKNPGIPYSHPFVQKAQELGIPVITEVELAYEVAECPIIGITGTNGKTTTTTMTGLLLNAGDLPGTARLAGNIGYPASSVAQEATADDKIVMELSSFQLMGITDFRPHVAVVTNIYEAHIDYHKTRKEYVKAKWHLQQNMTEKDYLILNWNQEELRELSKKTKATVLPFATEQKLPKGACSLDGSIYYNQEKIMDITELGVPGSHNVENALAAISVAKLYGISNEAIKNALHHFHGVPHRTQYVGEFQGRKFYNDSKATNILATKMALSGFQLDQLVLIAGGLDRGNSFDELIPALKGIKALITFGETQNRLEDAGKKAGIPVIKTAENAEAAVPIALELSEEGDSILLSPANASWDQYPNFEIRGERFMEAVNKLTIQK</sequence>
<protein>
    <recommendedName>
        <fullName>UDP-N-acetylmuramoylalanine--D-glutamate ligase</fullName>
        <ecNumber>6.3.2.9</ecNumber>
    </recommendedName>
    <alternativeName>
        <fullName>D-glutamic acid-adding enzyme</fullName>
    </alternativeName>
    <alternativeName>
        <fullName>UDP-N-acetylmuramoyl-L-alanyl-D-glutamate synthetase</fullName>
    </alternativeName>
</protein>
<comment type="function">
    <text evidence="1">Cell wall formation. Catalyzes the addition of glutamate to the nucleotide precursor UDP-N-acetylmuramoyl-L-alanine (UMA).</text>
</comment>
<comment type="catalytic activity">
    <reaction>
        <text>UDP-N-acetyl-alpha-D-muramoyl-L-alanine + D-glutamate + ATP = UDP-N-acetyl-alpha-D-muramoyl-L-alanyl-D-glutamate + ADP + phosphate + H(+)</text>
        <dbReference type="Rhea" id="RHEA:16429"/>
        <dbReference type="ChEBI" id="CHEBI:15378"/>
        <dbReference type="ChEBI" id="CHEBI:29986"/>
        <dbReference type="ChEBI" id="CHEBI:30616"/>
        <dbReference type="ChEBI" id="CHEBI:43474"/>
        <dbReference type="ChEBI" id="CHEBI:83898"/>
        <dbReference type="ChEBI" id="CHEBI:83900"/>
        <dbReference type="ChEBI" id="CHEBI:456216"/>
        <dbReference type="EC" id="6.3.2.9"/>
    </reaction>
</comment>
<comment type="pathway">
    <text>Cell wall biogenesis; peptidoglycan biosynthesis.</text>
</comment>
<comment type="subcellular location">
    <subcellularLocation>
        <location evidence="1">Cytoplasm</location>
    </subcellularLocation>
</comment>
<comment type="similarity">
    <text evidence="3">Belongs to the MurCDEF family.</text>
</comment>
<keyword id="KW-0067">ATP-binding</keyword>
<keyword id="KW-0131">Cell cycle</keyword>
<keyword id="KW-0132">Cell division</keyword>
<keyword id="KW-0133">Cell shape</keyword>
<keyword id="KW-0961">Cell wall biogenesis/degradation</keyword>
<keyword id="KW-0963">Cytoplasm</keyword>
<keyword id="KW-0436">Ligase</keyword>
<keyword id="KW-0547">Nucleotide-binding</keyword>
<keyword id="KW-0573">Peptidoglycan synthesis</keyword>
<evidence type="ECO:0000250" key="1"/>
<evidence type="ECO:0000255" key="2"/>
<evidence type="ECO:0000305" key="3"/>
<name>MURD_ENTHR</name>
<dbReference type="EC" id="6.3.2.9"/>
<dbReference type="EMBL" id="Y13922">
    <property type="protein sequence ID" value="CAA74234.1"/>
    <property type="molecule type" value="Genomic_DNA"/>
</dbReference>
<dbReference type="SMR" id="O07669"/>
<dbReference type="STRING" id="1354.A6P53_03400"/>
<dbReference type="UniPathway" id="UPA00219"/>
<dbReference type="GO" id="GO:0005737">
    <property type="term" value="C:cytoplasm"/>
    <property type="evidence" value="ECO:0007669"/>
    <property type="project" value="UniProtKB-SubCell"/>
</dbReference>
<dbReference type="GO" id="GO:0005524">
    <property type="term" value="F:ATP binding"/>
    <property type="evidence" value="ECO:0007669"/>
    <property type="project" value="UniProtKB-UniRule"/>
</dbReference>
<dbReference type="GO" id="GO:0008764">
    <property type="term" value="F:UDP-N-acetylmuramoylalanine-D-glutamate ligase activity"/>
    <property type="evidence" value="ECO:0007669"/>
    <property type="project" value="UniProtKB-UniRule"/>
</dbReference>
<dbReference type="GO" id="GO:0051301">
    <property type="term" value="P:cell division"/>
    <property type="evidence" value="ECO:0007669"/>
    <property type="project" value="UniProtKB-KW"/>
</dbReference>
<dbReference type="GO" id="GO:0071555">
    <property type="term" value="P:cell wall organization"/>
    <property type="evidence" value="ECO:0007669"/>
    <property type="project" value="UniProtKB-KW"/>
</dbReference>
<dbReference type="GO" id="GO:0009252">
    <property type="term" value="P:peptidoglycan biosynthetic process"/>
    <property type="evidence" value="ECO:0007669"/>
    <property type="project" value="UniProtKB-UniRule"/>
</dbReference>
<dbReference type="GO" id="GO:0008360">
    <property type="term" value="P:regulation of cell shape"/>
    <property type="evidence" value="ECO:0007669"/>
    <property type="project" value="UniProtKB-KW"/>
</dbReference>
<dbReference type="Gene3D" id="3.90.190.20">
    <property type="entry name" value="Mur ligase, C-terminal domain"/>
    <property type="match status" value="1"/>
</dbReference>
<dbReference type="Gene3D" id="3.40.1190.10">
    <property type="entry name" value="Mur-like, catalytic domain"/>
    <property type="match status" value="1"/>
</dbReference>
<dbReference type="Gene3D" id="3.40.50.720">
    <property type="entry name" value="NAD(P)-binding Rossmann-like Domain"/>
    <property type="match status" value="1"/>
</dbReference>
<dbReference type="HAMAP" id="MF_00639">
    <property type="entry name" value="MurD"/>
    <property type="match status" value="1"/>
</dbReference>
<dbReference type="InterPro" id="IPR036565">
    <property type="entry name" value="Mur-like_cat_sf"/>
</dbReference>
<dbReference type="InterPro" id="IPR004101">
    <property type="entry name" value="Mur_ligase_C"/>
</dbReference>
<dbReference type="InterPro" id="IPR036615">
    <property type="entry name" value="Mur_ligase_C_dom_sf"/>
</dbReference>
<dbReference type="InterPro" id="IPR013221">
    <property type="entry name" value="Mur_ligase_cen"/>
</dbReference>
<dbReference type="InterPro" id="IPR005762">
    <property type="entry name" value="MurD"/>
</dbReference>
<dbReference type="NCBIfam" id="TIGR01087">
    <property type="entry name" value="murD"/>
    <property type="match status" value="1"/>
</dbReference>
<dbReference type="PANTHER" id="PTHR43692">
    <property type="entry name" value="UDP-N-ACETYLMURAMOYLALANINE--D-GLUTAMATE LIGASE"/>
    <property type="match status" value="1"/>
</dbReference>
<dbReference type="PANTHER" id="PTHR43692:SF1">
    <property type="entry name" value="UDP-N-ACETYLMURAMOYLALANINE--D-GLUTAMATE LIGASE"/>
    <property type="match status" value="1"/>
</dbReference>
<dbReference type="Pfam" id="PF02875">
    <property type="entry name" value="Mur_ligase_C"/>
    <property type="match status" value="1"/>
</dbReference>
<dbReference type="Pfam" id="PF08245">
    <property type="entry name" value="Mur_ligase_M"/>
    <property type="match status" value="1"/>
</dbReference>
<dbReference type="Pfam" id="PF21799">
    <property type="entry name" value="MurD-like_N"/>
    <property type="match status" value="1"/>
</dbReference>
<dbReference type="SUPFAM" id="SSF51984">
    <property type="entry name" value="MurCD N-terminal domain"/>
    <property type="match status" value="1"/>
</dbReference>
<dbReference type="SUPFAM" id="SSF53623">
    <property type="entry name" value="MurD-like peptide ligases, catalytic domain"/>
    <property type="match status" value="1"/>
</dbReference>
<dbReference type="SUPFAM" id="SSF53244">
    <property type="entry name" value="MurD-like peptide ligases, peptide-binding domain"/>
    <property type="match status" value="1"/>
</dbReference>
<reference key="1">
    <citation type="journal article" date="1998" name="DNA Seq.">
        <title>The division and cell wall gene cluster of Enterococcus hirae S185.</title>
        <authorList>
            <person name="Duez C."/>
            <person name="Thamm I."/>
            <person name="Sapunaric F."/>
            <person name="Coyette J."/>
            <person name="Ghuysen J.-M."/>
        </authorList>
    </citation>
    <scope>NUCLEOTIDE SEQUENCE [GENOMIC DNA]</scope>
    <source>
        <strain>S185</strain>
    </source>
</reference>
<organism>
    <name type="scientific">Enterococcus hirae</name>
    <dbReference type="NCBI Taxonomy" id="1354"/>
    <lineage>
        <taxon>Bacteria</taxon>
        <taxon>Bacillati</taxon>
        <taxon>Bacillota</taxon>
        <taxon>Bacilli</taxon>
        <taxon>Lactobacillales</taxon>
        <taxon>Enterococcaceae</taxon>
        <taxon>Enterococcus</taxon>
    </lineage>
</organism>
<gene>
    <name type="primary">murD</name>
</gene>
<accession>O07669</accession>
<feature type="chain" id="PRO_0000109011" description="UDP-N-acetylmuramoylalanine--D-glutamate ligase">
    <location>
        <begin position="1"/>
        <end position="460"/>
    </location>
</feature>
<feature type="binding site" evidence="2">
    <location>
        <begin position="123"/>
        <end position="129"/>
    </location>
    <ligand>
        <name>ATP</name>
        <dbReference type="ChEBI" id="CHEBI:30616"/>
    </ligand>
</feature>